<organism>
    <name type="scientific">Homo sapiens</name>
    <name type="common">Human</name>
    <dbReference type="NCBI Taxonomy" id="9606"/>
    <lineage>
        <taxon>Eukaryota</taxon>
        <taxon>Metazoa</taxon>
        <taxon>Chordata</taxon>
        <taxon>Craniata</taxon>
        <taxon>Vertebrata</taxon>
        <taxon>Euteleostomi</taxon>
        <taxon>Mammalia</taxon>
        <taxon>Eutheria</taxon>
        <taxon>Euarchontoglires</taxon>
        <taxon>Primates</taxon>
        <taxon>Haplorrhini</taxon>
        <taxon>Catarrhini</taxon>
        <taxon>Hominidae</taxon>
        <taxon>Homo</taxon>
    </lineage>
</organism>
<keyword id="KW-0029">Amino-acid transport</keyword>
<keyword id="KW-1003">Cell membrane</keyword>
<keyword id="KW-0325">Glycoprotein</keyword>
<keyword id="KW-0472">Membrane</keyword>
<keyword id="KW-0532">Neurotransmitter transport</keyword>
<keyword id="KW-0597">Phosphoprotein</keyword>
<keyword id="KW-1267">Proteomics identification</keyword>
<keyword id="KW-1185">Reference proteome</keyword>
<keyword id="KW-0769">Symport</keyword>
<keyword id="KW-0770">Synapse</keyword>
<keyword id="KW-0812">Transmembrane</keyword>
<keyword id="KW-1133">Transmembrane helix</keyword>
<keyword id="KW-0813">Transport</keyword>
<proteinExistence type="evidence at protein level"/>
<accession>Q99884</accession>
<accession>Q0VG81</accession>
<accession>Q52LU6</accession>
<sequence length="636" mass="70911">MKKLQGAHLRKPVTPDLLMTPSDQGDVDLDVDFAAHRGNWTGKLDFLLSCIGYCVGLGNVWRFPYRAYTNGGGAFLVPYFLMLAICGIPLFFLELSLGQFSSLGPLAVWKISPLFKGAGAAMLLIVGLVAIYYNMIIAYVLFYLFASLTSDLPWEHCGNWWNTELCLEHRVSKDGNGALPLNLTCTVSPSEEYWSRYVLHIQGSQGIGSPGEIRWNLCLCLLLAWVIVFLCILKGVKSSGKVVYFTATFPYLILLMLLVRGVTLPGAWKGIQFYLTPQFHHLLSSKVWIEAALQIFYSLGVGFGGLLTFASYNTFHQNIYRDTFIVTLGNAITSILAGFAIFSVLGYMSQELGVPVDQVAKAGPGLAFVVYPQAMTMLPLSPFWSFLFFFMLLTLGLDSQFAFLETIVTAVTDEFPYYLRPKKAVFSGLICVAMYLMGLILTTDGGMYWLVLLDDYSASFGLMVVVITTCLAVTRVYGIQRFCRDIHMMLGFKPGLYFRACWLFLSPATLLALMVYSIVKYQPSEYGSYRFPPWAELLGILMGLLSCLMIPAGMLVAVLREEGSLWERLQQASRPAMDWGPSLEENRTGMYVATLAGSQSPKPLMVHMRKYGGITSFENTAIEVDREIAEEEESMM</sequence>
<feature type="chain" id="PRO_0000214770" description="Sodium-dependent proline transporter">
    <location>
        <begin position="1"/>
        <end position="636"/>
    </location>
</feature>
<feature type="topological domain" description="Cytoplasmic" evidence="3">
    <location>
        <begin position="1"/>
        <end position="45"/>
    </location>
</feature>
<feature type="transmembrane region" description="Helical; Name=1" evidence="3">
    <location>
        <begin position="46"/>
        <end position="66"/>
    </location>
</feature>
<feature type="transmembrane region" description="Helical; Name=2" evidence="3">
    <location>
        <begin position="74"/>
        <end position="93"/>
    </location>
</feature>
<feature type="transmembrane region" description="Helical; Name=3" evidence="3">
    <location>
        <begin position="117"/>
        <end position="137"/>
    </location>
</feature>
<feature type="topological domain" description="Extracellular" evidence="3">
    <location>
        <begin position="138"/>
        <end position="214"/>
    </location>
</feature>
<feature type="transmembrane region" description="Helical; Name=4" evidence="3">
    <location>
        <begin position="215"/>
        <end position="233"/>
    </location>
</feature>
<feature type="transmembrane region" description="Helical; Name=5" evidence="3">
    <location>
        <begin position="242"/>
        <end position="259"/>
    </location>
</feature>
<feature type="transmembrane region" description="Helical; Name=6" evidence="3">
    <location>
        <begin position="295"/>
        <end position="312"/>
    </location>
</feature>
<feature type="transmembrane region" description="Helical; Name=7" evidence="3">
    <location>
        <begin position="324"/>
        <end position="345"/>
    </location>
</feature>
<feature type="transmembrane region" description="Helical; Name=8" evidence="3">
    <location>
        <begin position="378"/>
        <end position="397"/>
    </location>
</feature>
<feature type="transmembrane region" description="Helical; Name=9" evidence="3">
    <location>
        <begin position="425"/>
        <end position="443"/>
    </location>
</feature>
<feature type="transmembrane region" description="Helical; Name=10" evidence="3">
    <location>
        <begin position="459"/>
        <end position="479"/>
    </location>
</feature>
<feature type="transmembrane region" description="Helical; Name=11" evidence="3">
    <location>
        <begin position="500"/>
        <end position="519"/>
    </location>
</feature>
<feature type="transmembrane region" description="Helical; Name=12" evidence="3">
    <location>
        <begin position="538"/>
        <end position="556"/>
    </location>
</feature>
<feature type="topological domain" description="Cytoplasmic" evidence="3">
    <location>
        <begin position="557"/>
        <end position="636"/>
    </location>
</feature>
<feature type="modified residue" description="Phosphothreonine" evidence="2">
    <location>
        <position position="20"/>
    </location>
</feature>
<feature type="modified residue" description="Phosphoserine" evidence="2">
    <location>
        <position position="22"/>
    </location>
</feature>
<feature type="modified residue" description="Phosphoserine" evidence="1">
    <location>
        <position position="573"/>
    </location>
</feature>
<feature type="modified residue" description="Phosphoserine" evidence="1">
    <location>
        <position position="582"/>
    </location>
</feature>
<feature type="modified residue" description="Phosphothreonine" evidence="1">
    <location>
        <position position="588"/>
    </location>
</feature>
<feature type="modified residue" description="Phosphotyrosine" evidence="1">
    <location>
        <position position="591"/>
    </location>
</feature>
<feature type="modified residue" description="Phosphoserine" evidence="2">
    <location>
        <position position="598"/>
    </location>
</feature>
<feature type="modified residue" description="Phosphoserine" evidence="2">
    <location>
        <position position="600"/>
    </location>
</feature>
<feature type="glycosylation site" description="N-linked (GlcNAc...) asparagine" evidence="3">
    <location>
        <position position="182"/>
    </location>
</feature>
<feature type="sequence variant" id="VAR_011390" description="In dbSNP:rs1468564.">
    <original>L</original>
    <variation>V</variation>
    <location>
        <position position="345"/>
    </location>
</feature>
<feature type="sequence conflict" description="In Ref. 1; AAB47007 and 3; AAH69631/AAH93785/AAI13426." evidence="6" ref="1 3">
    <original>M</original>
    <variation>L</variation>
    <location>
        <position position="514"/>
    </location>
</feature>
<name>SC6A7_HUMAN</name>
<comment type="function">
    <text evidence="4 7">Brain specific sodium (and chloride)-dependent proline transporter (PubMed:7651355). Terminates the action of proline by its high affinity sodium-dependent reuptake into presynaptic terminals (Probable).</text>
</comment>
<comment type="catalytic activity">
    <reaction evidence="4">
        <text>L-proline(out) + chloride(out) + 2 Na(+)(out) = L-proline(in) + chloride(in) + 2 Na(+)(in)</text>
        <dbReference type="Rhea" id="RHEA:71263"/>
        <dbReference type="ChEBI" id="CHEBI:17996"/>
        <dbReference type="ChEBI" id="CHEBI:29101"/>
        <dbReference type="ChEBI" id="CHEBI:60039"/>
    </reaction>
</comment>
<comment type="catalytic activity">
    <reaction evidence="1">
        <text>L-pipecolate(out) + chloride(out) + 2 Na(+)(out) = L-pipecolate(in) + chloride(in) + 2 Na(+)(in)</text>
        <dbReference type="Rhea" id="RHEA:71267"/>
        <dbReference type="ChEBI" id="CHEBI:17996"/>
        <dbReference type="ChEBI" id="CHEBI:29101"/>
        <dbReference type="ChEBI" id="CHEBI:61185"/>
    </reaction>
</comment>
<comment type="biophysicochemical properties">
    <kinetics>
        <KM evidence="4">6.2 uM for L-proline</KM>
    </kinetics>
</comment>
<comment type="subcellular location">
    <subcellularLocation>
        <location evidence="4">Synaptic cell membrane</location>
        <topology evidence="3">Multi-pass membrane protein</topology>
    </subcellularLocation>
</comment>
<comment type="tissue specificity">
    <text evidence="4">Brain specific (at protein level) (PubMed:7651355). Highly expressed in hippocampus, corpus striatum and temporal cortex. Also expressed in frontal cortex, occipital cortex and, at lower levels, in cerebellum and parietal cortex (at protein level) (PubMed:7651355).</text>
</comment>
<comment type="similarity">
    <text evidence="6">Belongs to the sodium:neurotransmitter symporter (SNF) (TC 2.A.22) family. SLC6A7 subfamily.</text>
</comment>
<protein>
    <recommendedName>
        <fullName evidence="6">Sodium-dependent proline transporter</fullName>
    </recommendedName>
    <alternativeName>
        <fullName>Solute carrier family 6 member 7</fullName>
    </alternativeName>
</protein>
<dbReference type="EMBL" id="S80071">
    <property type="protein sequence ID" value="AAB47007.2"/>
    <property type="molecule type" value="mRNA"/>
</dbReference>
<dbReference type="EMBL" id="AC005895">
    <property type="status" value="NOT_ANNOTATED_CDS"/>
    <property type="molecule type" value="Genomic_DNA"/>
</dbReference>
<dbReference type="EMBL" id="BC069631">
    <property type="protein sequence ID" value="AAH69631.1"/>
    <property type="molecule type" value="mRNA"/>
</dbReference>
<dbReference type="EMBL" id="BC093785">
    <property type="protein sequence ID" value="AAH93785.1"/>
    <property type="molecule type" value="mRNA"/>
</dbReference>
<dbReference type="EMBL" id="BC113425">
    <property type="protein sequence ID" value="AAI13426.1"/>
    <property type="molecule type" value="mRNA"/>
</dbReference>
<dbReference type="CCDS" id="CCDS4305.1"/>
<dbReference type="RefSeq" id="NP_055043.2">
    <property type="nucleotide sequence ID" value="NM_014228.5"/>
</dbReference>
<dbReference type="SMR" id="Q99884"/>
<dbReference type="FunCoup" id="Q99884">
    <property type="interactions" value="79"/>
</dbReference>
<dbReference type="STRING" id="9606.ENSP00000230671"/>
<dbReference type="BindingDB" id="Q99884"/>
<dbReference type="ChEMBL" id="CHEMBL3317335"/>
<dbReference type="DrugBank" id="DB00172">
    <property type="generic name" value="Proline"/>
</dbReference>
<dbReference type="GuidetoPHARMACOLOGY" id="938"/>
<dbReference type="TCDB" id="2.A.22.2.11">
    <property type="family name" value="the neurotransmitter:sodium symporter (nss) family"/>
</dbReference>
<dbReference type="GlyCosmos" id="Q99884">
    <property type="glycosylation" value="1 site, No reported glycans"/>
</dbReference>
<dbReference type="GlyGen" id="Q99884">
    <property type="glycosylation" value="1 site"/>
</dbReference>
<dbReference type="iPTMnet" id="Q99884"/>
<dbReference type="PhosphoSitePlus" id="Q99884"/>
<dbReference type="BioMuta" id="SLC6A7"/>
<dbReference type="DMDM" id="296452899"/>
<dbReference type="jPOST" id="Q99884"/>
<dbReference type="MassIVE" id="Q99884"/>
<dbReference type="PaxDb" id="9606-ENSP00000230671"/>
<dbReference type="PeptideAtlas" id="Q99884"/>
<dbReference type="ProteomicsDB" id="78518"/>
<dbReference type="Antibodypedia" id="27933">
    <property type="antibodies" value="78 antibodies from 17 providers"/>
</dbReference>
<dbReference type="DNASU" id="6534"/>
<dbReference type="Ensembl" id="ENST00000230671.7">
    <property type="protein sequence ID" value="ENSP00000230671.2"/>
    <property type="gene ID" value="ENSG00000011083.9"/>
</dbReference>
<dbReference type="GeneID" id="6534"/>
<dbReference type="KEGG" id="hsa:6534"/>
<dbReference type="MANE-Select" id="ENST00000230671.7">
    <property type="protein sequence ID" value="ENSP00000230671.2"/>
    <property type="RefSeq nucleotide sequence ID" value="NM_014228.5"/>
    <property type="RefSeq protein sequence ID" value="NP_055043.2"/>
</dbReference>
<dbReference type="UCSC" id="uc003lrr.3">
    <property type="organism name" value="human"/>
</dbReference>
<dbReference type="AGR" id="HGNC:11054"/>
<dbReference type="CTD" id="6534"/>
<dbReference type="DisGeNET" id="6534"/>
<dbReference type="GeneCards" id="SLC6A7"/>
<dbReference type="HGNC" id="HGNC:11054">
    <property type="gene designation" value="SLC6A7"/>
</dbReference>
<dbReference type="HPA" id="ENSG00000011083">
    <property type="expression patterns" value="Tissue enriched (brain)"/>
</dbReference>
<dbReference type="MIM" id="606205">
    <property type="type" value="gene"/>
</dbReference>
<dbReference type="neXtProt" id="NX_Q99884"/>
<dbReference type="OpenTargets" id="ENSG00000011083"/>
<dbReference type="PharmGKB" id="PA35914"/>
<dbReference type="VEuPathDB" id="HostDB:ENSG00000011083"/>
<dbReference type="eggNOG" id="KOG3660">
    <property type="taxonomic scope" value="Eukaryota"/>
</dbReference>
<dbReference type="GeneTree" id="ENSGT00940000160823"/>
<dbReference type="HOGENOM" id="CLU_006855_9_4_1"/>
<dbReference type="InParanoid" id="Q99884"/>
<dbReference type="OMA" id="RFPTWAE"/>
<dbReference type="OrthoDB" id="6581954at2759"/>
<dbReference type="PAN-GO" id="Q99884">
    <property type="GO annotations" value="3 GO annotations based on evolutionary models"/>
</dbReference>
<dbReference type="PhylomeDB" id="Q99884"/>
<dbReference type="TreeFam" id="TF343812"/>
<dbReference type="PathwayCommons" id="Q99884"/>
<dbReference type="Reactome" id="R-HSA-442660">
    <property type="pathway name" value="Na+/Cl- dependent neurotransmitter transporters"/>
</dbReference>
<dbReference type="Reactome" id="R-HSA-71288">
    <property type="pathway name" value="Creatine metabolism"/>
</dbReference>
<dbReference type="BioGRID-ORCS" id="6534">
    <property type="hits" value="12 hits in 1145 CRISPR screens"/>
</dbReference>
<dbReference type="ChiTaRS" id="SLC6A7">
    <property type="organism name" value="human"/>
</dbReference>
<dbReference type="GenomeRNAi" id="6534"/>
<dbReference type="Pharos" id="Q99884">
    <property type="development level" value="Tchem"/>
</dbReference>
<dbReference type="PRO" id="PR:Q99884"/>
<dbReference type="Proteomes" id="UP000005640">
    <property type="component" value="Chromosome 5"/>
</dbReference>
<dbReference type="RNAct" id="Q99884">
    <property type="molecule type" value="protein"/>
</dbReference>
<dbReference type="Bgee" id="ENSG00000011083">
    <property type="expression patterns" value="Expressed in right hemisphere of cerebellum and 70 other cell types or tissues"/>
</dbReference>
<dbReference type="ExpressionAtlas" id="Q99884">
    <property type="expression patterns" value="baseline and differential"/>
</dbReference>
<dbReference type="GO" id="GO:0016020">
    <property type="term" value="C:membrane"/>
    <property type="evidence" value="ECO:0000304"/>
    <property type="project" value="ProtInc"/>
</dbReference>
<dbReference type="GO" id="GO:0005886">
    <property type="term" value="C:plasma membrane"/>
    <property type="evidence" value="ECO:0000318"/>
    <property type="project" value="GO_Central"/>
</dbReference>
<dbReference type="GO" id="GO:0045202">
    <property type="term" value="C:synapse"/>
    <property type="evidence" value="ECO:0000314"/>
    <property type="project" value="SynGO"/>
</dbReference>
<dbReference type="GO" id="GO:0097060">
    <property type="term" value="C:synaptic membrane"/>
    <property type="evidence" value="ECO:0007669"/>
    <property type="project" value="UniProtKB-SubCell"/>
</dbReference>
<dbReference type="GO" id="GO:0015193">
    <property type="term" value="F:L-proline transmembrane transporter activity"/>
    <property type="evidence" value="ECO:0000314"/>
    <property type="project" value="UniProtKB"/>
</dbReference>
<dbReference type="GO" id="GO:0005298">
    <property type="term" value="F:proline:sodium symporter activity"/>
    <property type="evidence" value="ECO:0000314"/>
    <property type="project" value="UniProtKB"/>
</dbReference>
<dbReference type="GO" id="GO:1903804">
    <property type="term" value="P:glycine import across plasma membrane"/>
    <property type="evidence" value="ECO:0000318"/>
    <property type="project" value="GO_Central"/>
</dbReference>
<dbReference type="GO" id="GO:0006836">
    <property type="term" value="P:neurotransmitter transport"/>
    <property type="evidence" value="ECO:0007669"/>
    <property type="project" value="UniProtKB-KW"/>
</dbReference>
<dbReference type="GO" id="GO:0015824">
    <property type="term" value="P:proline transport"/>
    <property type="evidence" value="ECO:0000314"/>
    <property type="project" value="UniProtKB"/>
</dbReference>
<dbReference type="GO" id="GO:0030163">
    <property type="term" value="P:protein catabolic process"/>
    <property type="evidence" value="ECO:0000314"/>
    <property type="project" value="SynGO"/>
</dbReference>
<dbReference type="GO" id="GO:0035725">
    <property type="term" value="P:sodium ion transmembrane transport"/>
    <property type="evidence" value="ECO:0000318"/>
    <property type="project" value="GO_Central"/>
</dbReference>
<dbReference type="CDD" id="cd11500">
    <property type="entry name" value="SLC6sbd_PROT"/>
    <property type="match status" value="1"/>
</dbReference>
<dbReference type="InterPro" id="IPR000175">
    <property type="entry name" value="Na/ntran_symport"/>
</dbReference>
<dbReference type="InterPro" id="IPR037272">
    <property type="entry name" value="SNS_sf"/>
</dbReference>
<dbReference type="PANTHER" id="PTHR11616:SF231">
    <property type="entry name" value="SODIUM-DEPENDENT PROLINE TRANSPORTER"/>
    <property type="match status" value="1"/>
</dbReference>
<dbReference type="PANTHER" id="PTHR11616">
    <property type="entry name" value="SODIUM/CHLORIDE DEPENDENT TRANSPORTER"/>
    <property type="match status" value="1"/>
</dbReference>
<dbReference type="Pfam" id="PF00209">
    <property type="entry name" value="SNF"/>
    <property type="match status" value="1"/>
</dbReference>
<dbReference type="PRINTS" id="PR00176">
    <property type="entry name" value="NANEUSMPORT"/>
</dbReference>
<dbReference type="SUPFAM" id="SSF161070">
    <property type="entry name" value="SNF-like"/>
    <property type="match status" value="1"/>
</dbReference>
<dbReference type="PROSITE" id="PS00610">
    <property type="entry name" value="NA_NEUROTRAN_SYMP_1"/>
    <property type="match status" value="1"/>
</dbReference>
<dbReference type="PROSITE" id="PS00754">
    <property type="entry name" value="NA_NEUROTRAN_SYMP_2"/>
    <property type="match status" value="1"/>
</dbReference>
<dbReference type="PROSITE" id="PS50267">
    <property type="entry name" value="NA_NEUROTRAN_SYMP_3"/>
    <property type="match status" value="1"/>
</dbReference>
<evidence type="ECO:0000250" key="1">
    <source>
        <dbReference type="UniProtKB" id="P28573"/>
    </source>
</evidence>
<evidence type="ECO:0000250" key="2">
    <source>
        <dbReference type="UniProtKB" id="Q6PGE7"/>
    </source>
</evidence>
<evidence type="ECO:0000255" key="3"/>
<evidence type="ECO:0000269" key="4">
    <source>
    </source>
</evidence>
<evidence type="ECO:0000303" key="5">
    <source>
    </source>
</evidence>
<evidence type="ECO:0000305" key="6"/>
<evidence type="ECO:0000305" key="7">
    <source>
    </source>
</evidence>
<evidence type="ECO:0000312" key="8">
    <source>
        <dbReference type="HGNC" id="HGNC:11054"/>
    </source>
</evidence>
<reference key="1">
    <citation type="journal article" date="1995" name="Mol. Pharmacol.">
        <title>Human brain-specific L-proline transporter: molecular cloning, functional expression, and chromosomal localization of the gene in human and mouse genomes.</title>
        <authorList>
            <person name="Shafqat S."/>
            <person name="Velaz-Faircloth M."/>
            <person name="Henzi V.A."/>
            <person name="Whitney K.D."/>
            <person name="Yang-Feng T.L."/>
            <person name="Seldin M.F."/>
            <person name="Fremeau R.T. Jr."/>
        </authorList>
    </citation>
    <scope>NUCLEOTIDE SEQUENCE [MRNA]</scope>
    <scope>TRANSPORTER ACTIVITY</scope>
    <scope>TISSUE SPECIFICITY</scope>
    <scope>FUNCTION</scope>
    <scope>BIOPHYSICOCHEMICAL PROPERTIES</scope>
    <scope>SUBCELLULAR LOCATION</scope>
    <source>
        <tissue>Hippocampus</tissue>
    </source>
</reference>
<reference key="2">
    <citation type="journal article" date="2004" name="Nature">
        <title>The DNA sequence and comparative analysis of human chromosome 5.</title>
        <authorList>
            <person name="Schmutz J."/>
            <person name="Martin J."/>
            <person name="Terry A."/>
            <person name="Couronne O."/>
            <person name="Grimwood J."/>
            <person name="Lowry S."/>
            <person name="Gordon L.A."/>
            <person name="Scott D."/>
            <person name="Xie G."/>
            <person name="Huang W."/>
            <person name="Hellsten U."/>
            <person name="Tran-Gyamfi M."/>
            <person name="She X."/>
            <person name="Prabhakar S."/>
            <person name="Aerts A."/>
            <person name="Altherr M."/>
            <person name="Bajorek E."/>
            <person name="Black S."/>
            <person name="Branscomb E."/>
            <person name="Caoile C."/>
            <person name="Challacombe J.F."/>
            <person name="Chan Y.M."/>
            <person name="Denys M."/>
            <person name="Detter J.C."/>
            <person name="Escobar J."/>
            <person name="Flowers D."/>
            <person name="Fotopulos D."/>
            <person name="Glavina T."/>
            <person name="Gomez M."/>
            <person name="Gonzales E."/>
            <person name="Goodstein D."/>
            <person name="Grigoriev I."/>
            <person name="Groza M."/>
            <person name="Hammon N."/>
            <person name="Hawkins T."/>
            <person name="Haydu L."/>
            <person name="Israni S."/>
            <person name="Jett J."/>
            <person name="Kadner K."/>
            <person name="Kimball H."/>
            <person name="Kobayashi A."/>
            <person name="Lopez F."/>
            <person name="Lou Y."/>
            <person name="Martinez D."/>
            <person name="Medina C."/>
            <person name="Morgan J."/>
            <person name="Nandkeshwar R."/>
            <person name="Noonan J.P."/>
            <person name="Pitluck S."/>
            <person name="Pollard M."/>
            <person name="Predki P."/>
            <person name="Priest J."/>
            <person name="Ramirez L."/>
            <person name="Retterer J."/>
            <person name="Rodriguez A."/>
            <person name="Rogers S."/>
            <person name="Salamov A."/>
            <person name="Salazar A."/>
            <person name="Thayer N."/>
            <person name="Tice H."/>
            <person name="Tsai M."/>
            <person name="Ustaszewska A."/>
            <person name="Vo N."/>
            <person name="Wheeler J."/>
            <person name="Wu K."/>
            <person name="Yang J."/>
            <person name="Dickson M."/>
            <person name="Cheng J.-F."/>
            <person name="Eichler E.E."/>
            <person name="Olsen A."/>
            <person name="Pennacchio L.A."/>
            <person name="Rokhsar D.S."/>
            <person name="Richardson P."/>
            <person name="Lucas S.M."/>
            <person name="Myers R.M."/>
            <person name="Rubin E.M."/>
        </authorList>
    </citation>
    <scope>NUCLEOTIDE SEQUENCE [LARGE SCALE GENOMIC DNA]</scope>
</reference>
<reference key="3">
    <citation type="journal article" date="2004" name="Genome Res.">
        <title>The status, quality, and expansion of the NIH full-length cDNA project: the Mammalian Gene Collection (MGC).</title>
        <authorList>
            <consortium name="The MGC Project Team"/>
        </authorList>
    </citation>
    <scope>NUCLEOTIDE SEQUENCE [LARGE SCALE MRNA]</scope>
    <source>
        <tissue>Colon</tissue>
    </source>
</reference>
<gene>
    <name evidence="8" type="primary">SLC6A7</name>
    <name evidence="5" type="synonym">PROT</name>
</gene>